<organism>
    <name type="scientific">Bacillus cereus (strain B4264)</name>
    <dbReference type="NCBI Taxonomy" id="405532"/>
    <lineage>
        <taxon>Bacteria</taxon>
        <taxon>Bacillati</taxon>
        <taxon>Bacillota</taxon>
        <taxon>Bacilli</taxon>
        <taxon>Bacillales</taxon>
        <taxon>Bacillaceae</taxon>
        <taxon>Bacillus</taxon>
        <taxon>Bacillus cereus group</taxon>
    </lineage>
</organism>
<name>MTNK_BACC4</name>
<accession>B7H924</accession>
<keyword id="KW-0028">Amino-acid biosynthesis</keyword>
<keyword id="KW-0067">ATP-binding</keyword>
<keyword id="KW-0418">Kinase</keyword>
<keyword id="KW-0486">Methionine biosynthesis</keyword>
<keyword id="KW-0547">Nucleotide-binding</keyword>
<keyword id="KW-0808">Transferase</keyword>
<gene>
    <name evidence="1" type="primary">mtnK</name>
    <name type="ordered locus">BCB4264_A4140</name>
</gene>
<feature type="chain" id="PRO_1000187401" description="Methylthioribose kinase">
    <location>
        <begin position="1"/>
        <end position="393"/>
    </location>
</feature>
<feature type="binding site" evidence="1">
    <location>
        <position position="38"/>
    </location>
    <ligand>
        <name>ATP</name>
        <dbReference type="ChEBI" id="CHEBI:30616"/>
    </ligand>
</feature>
<feature type="binding site" evidence="1">
    <location>
        <position position="53"/>
    </location>
    <ligand>
        <name>ATP</name>
        <dbReference type="ChEBI" id="CHEBI:30616"/>
    </ligand>
</feature>
<feature type="binding site" evidence="1">
    <location>
        <begin position="107"/>
        <end position="109"/>
    </location>
    <ligand>
        <name>ATP</name>
        <dbReference type="ChEBI" id="CHEBI:30616"/>
    </ligand>
</feature>
<feature type="binding site" evidence="1">
    <location>
        <position position="225"/>
    </location>
    <ligand>
        <name>substrate</name>
    </ligand>
</feature>
<feature type="binding site" evidence="1">
    <location>
        <begin position="242"/>
        <end position="244"/>
    </location>
    <ligand>
        <name>ATP</name>
        <dbReference type="ChEBI" id="CHEBI:30616"/>
    </ligand>
</feature>
<feature type="binding site" evidence="1">
    <location>
        <position position="332"/>
    </location>
    <ligand>
        <name>substrate</name>
    </ligand>
</feature>
<dbReference type="EC" id="2.7.1.100" evidence="1"/>
<dbReference type="EMBL" id="CP001176">
    <property type="protein sequence ID" value="ACK63561.1"/>
    <property type="molecule type" value="Genomic_DNA"/>
</dbReference>
<dbReference type="RefSeq" id="WP_000542682.1">
    <property type="nucleotide sequence ID" value="NC_011725.1"/>
</dbReference>
<dbReference type="SMR" id="B7H924"/>
<dbReference type="KEGG" id="bcb:BCB4264_A4140"/>
<dbReference type="HOGENOM" id="CLU_033681_0_0_9"/>
<dbReference type="UniPathway" id="UPA00904">
    <property type="reaction ID" value="UER00872"/>
</dbReference>
<dbReference type="Proteomes" id="UP000007096">
    <property type="component" value="Chromosome"/>
</dbReference>
<dbReference type="GO" id="GO:0005524">
    <property type="term" value="F:ATP binding"/>
    <property type="evidence" value="ECO:0007669"/>
    <property type="project" value="UniProtKB-UniRule"/>
</dbReference>
<dbReference type="GO" id="GO:0046522">
    <property type="term" value="F:S-methyl-5-thioribose kinase activity"/>
    <property type="evidence" value="ECO:0007669"/>
    <property type="project" value="UniProtKB-UniRule"/>
</dbReference>
<dbReference type="GO" id="GO:0019509">
    <property type="term" value="P:L-methionine salvage from methylthioadenosine"/>
    <property type="evidence" value="ECO:0007669"/>
    <property type="project" value="UniProtKB-UniRule"/>
</dbReference>
<dbReference type="FunFam" id="3.30.200.20:FF:000436">
    <property type="entry name" value="Methylthioribose kinase"/>
    <property type="match status" value="1"/>
</dbReference>
<dbReference type="FunFam" id="3.90.1200.10:FF:000008">
    <property type="entry name" value="Methylthioribose kinase"/>
    <property type="match status" value="1"/>
</dbReference>
<dbReference type="Gene3D" id="3.90.1200.10">
    <property type="match status" value="1"/>
</dbReference>
<dbReference type="Gene3D" id="3.30.200.20">
    <property type="entry name" value="Phosphorylase Kinase, domain 1"/>
    <property type="match status" value="1"/>
</dbReference>
<dbReference type="HAMAP" id="MF_01683">
    <property type="entry name" value="Salvage_MtnK"/>
    <property type="match status" value="1"/>
</dbReference>
<dbReference type="InterPro" id="IPR002575">
    <property type="entry name" value="Aminoglycoside_PTrfase"/>
</dbReference>
<dbReference type="InterPro" id="IPR011009">
    <property type="entry name" value="Kinase-like_dom_sf"/>
</dbReference>
<dbReference type="InterPro" id="IPR009212">
    <property type="entry name" value="Methylthioribose_kinase"/>
</dbReference>
<dbReference type="NCBIfam" id="TIGR01767">
    <property type="entry name" value="MTRK"/>
    <property type="match status" value="1"/>
</dbReference>
<dbReference type="PANTHER" id="PTHR34273">
    <property type="entry name" value="METHYLTHIORIBOSE KINASE"/>
    <property type="match status" value="1"/>
</dbReference>
<dbReference type="PANTHER" id="PTHR34273:SF2">
    <property type="entry name" value="METHYLTHIORIBOSE KINASE"/>
    <property type="match status" value="1"/>
</dbReference>
<dbReference type="Pfam" id="PF01636">
    <property type="entry name" value="APH"/>
    <property type="match status" value="1"/>
</dbReference>
<dbReference type="PIRSF" id="PIRSF031134">
    <property type="entry name" value="MTRK"/>
    <property type="match status" value="1"/>
</dbReference>
<dbReference type="SUPFAM" id="SSF56112">
    <property type="entry name" value="Protein kinase-like (PK-like)"/>
    <property type="match status" value="1"/>
</dbReference>
<proteinExistence type="inferred from homology"/>
<evidence type="ECO:0000255" key="1">
    <source>
        <dbReference type="HAMAP-Rule" id="MF_01683"/>
    </source>
</evidence>
<comment type="function">
    <text evidence="1">Catalyzes the phosphorylation of methylthioribose into methylthioribose-1-phosphate.</text>
</comment>
<comment type="catalytic activity">
    <reaction evidence="1">
        <text>5-(methylsulfanyl)-D-ribose + ATP = 5-(methylsulfanyl)-alpha-D-ribose 1-phosphate + ADP + H(+)</text>
        <dbReference type="Rhea" id="RHEA:22312"/>
        <dbReference type="ChEBI" id="CHEBI:15378"/>
        <dbReference type="ChEBI" id="CHEBI:30616"/>
        <dbReference type="ChEBI" id="CHEBI:58533"/>
        <dbReference type="ChEBI" id="CHEBI:78440"/>
        <dbReference type="ChEBI" id="CHEBI:456216"/>
        <dbReference type="EC" id="2.7.1.100"/>
    </reaction>
</comment>
<comment type="pathway">
    <text evidence="1">Amino-acid biosynthesis; L-methionine biosynthesis via salvage pathway; S-methyl-5-thio-alpha-D-ribose 1-phosphate from S-methyl-5'-thioadenosine (hydrolase route): step 2/2.</text>
</comment>
<comment type="subunit">
    <text evidence="1">Homodimer.</text>
</comment>
<comment type="similarity">
    <text evidence="1">Belongs to the methylthioribose kinase family.</text>
</comment>
<protein>
    <recommendedName>
        <fullName evidence="1">Methylthioribose kinase</fullName>
        <shortName evidence="1">MTR kinase</shortName>
        <ecNumber evidence="1">2.7.1.100</ecNumber>
    </recommendedName>
</protein>
<reference key="1">
    <citation type="submission" date="2008-10" db="EMBL/GenBank/DDBJ databases">
        <title>Genome sequence of Bacillus cereus B4264.</title>
        <authorList>
            <person name="Dodson R.J."/>
            <person name="Durkin A.S."/>
            <person name="Rosovitz M.J."/>
            <person name="Rasko D.A."/>
            <person name="Hoffmaster A."/>
            <person name="Ravel J."/>
            <person name="Sutton G."/>
        </authorList>
    </citation>
    <scope>NUCLEOTIDE SEQUENCE [LARGE SCALE GENOMIC DNA]</scope>
    <source>
        <strain>B4264</strain>
    </source>
</reference>
<sequence length="393" mass="44947">MGYYSLTEITAVQYAKDHGYFEEKANVICHEIGDGNLNYVFKLDDGEKSIIIKQALPYAKVVGESWPLSIKRATIESKALQIFAQYVPDYVPVVYSHDEELAITVIEDLSRLTITRKGLIDGEEYPLLSQHIGRFLAHVLFYTSDFGLQSEEKRILEGTFVNPDLCKITEDLVFTDPFGHYDTNDYEPDLQLVVDELWSDKTLKLKVAQYKYKFLTRKETLIHGDLHTGSIFSSPSETKVIDPEFATYGPFGFDIGQFIANLLLNALSREEEKRSVLFFHIEKTWSYFVETFTKLWIGEGVEAYTKEKQWLPIILQNIFTDAVGFAGCELIRRTIGLAHVADLDEIENKETRIQAKKQALSLGKELIKYESKSADIQLFRTLFQQTVSRGVKA</sequence>